<reference key="1">
    <citation type="journal article" date="2006" name="Science">
        <title>The genome of black cottonwood, Populus trichocarpa (Torr. &amp; Gray).</title>
        <authorList>
            <person name="Tuskan G.A."/>
            <person name="Difazio S."/>
            <person name="Jansson S."/>
            <person name="Bohlmann J."/>
            <person name="Grigoriev I."/>
            <person name="Hellsten U."/>
            <person name="Putnam N."/>
            <person name="Ralph S."/>
            <person name="Rombauts S."/>
            <person name="Salamov A."/>
            <person name="Schein J."/>
            <person name="Sterck L."/>
            <person name="Aerts A."/>
            <person name="Bhalerao R.R."/>
            <person name="Bhalerao R.P."/>
            <person name="Blaudez D."/>
            <person name="Boerjan W."/>
            <person name="Brun A."/>
            <person name="Brunner A."/>
            <person name="Busov V."/>
            <person name="Campbell M."/>
            <person name="Carlson J."/>
            <person name="Chalot M."/>
            <person name="Chapman J."/>
            <person name="Chen G.-L."/>
            <person name="Cooper D."/>
            <person name="Coutinho P.M."/>
            <person name="Couturier J."/>
            <person name="Covert S."/>
            <person name="Cronk Q."/>
            <person name="Cunningham R."/>
            <person name="Davis J."/>
            <person name="Degroeve S."/>
            <person name="Dejardin A."/>
            <person name="dePamphilis C.W."/>
            <person name="Detter J."/>
            <person name="Dirks B."/>
            <person name="Dubchak I."/>
            <person name="Duplessis S."/>
            <person name="Ehlting J."/>
            <person name="Ellis B."/>
            <person name="Gendler K."/>
            <person name="Goodstein D."/>
            <person name="Gribskov M."/>
            <person name="Grimwood J."/>
            <person name="Groover A."/>
            <person name="Gunter L."/>
            <person name="Hamberger B."/>
            <person name="Heinze B."/>
            <person name="Helariutta Y."/>
            <person name="Henrissat B."/>
            <person name="Holligan D."/>
            <person name="Holt R."/>
            <person name="Huang W."/>
            <person name="Islam-Faridi N."/>
            <person name="Jones S."/>
            <person name="Jones-Rhoades M."/>
            <person name="Jorgensen R."/>
            <person name="Joshi C."/>
            <person name="Kangasjaervi J."/>
            <person name="Karlsson J."/>
            <person name="Kelleher C."/>
            <person name="Kirkpatrick R."/>
            <person name="Kirst M."/>
            <person name="Kohler A."/>
            <person name="Kalluri U."/>
            <person name="Larimer F."/>
            <person name="Leebens-Mack J."/>
            <person name="Leple J.-C."/>
            <person name="Locascio P."/>
            <person name="Lou Y."/>
            <person name="Lucas S."/>
            <person name="Martin F."/>
            <person name="Montanini B."/>
            <person name="Napoli C."/>
            <person name="Nelson D.R."/>
            <person name="Nelson C."/>
            <person name="Nieminen K."/>
            <person name="Nilsson O."/>
            <person name="Pereda V."/>
            <person name="Peter G."/>
            <person name="Philippe R."/>
            <person name="Pilate G."/>
            <person name="Poliakov A."/>
            <person name="Razumovskaya J."/>
            <person name="Richardson P."/>
            <person name="Rinaldi C."/>
            <person name="Ritland K."/>
            <person name="Rouze P."/>
            <person name="Ryaboy D."/>
            <person name="Schmutz J."/>
            <person name="Schrader J."/>
            <person name="Segerman B."/>
            <person name="Shin H."/>
            <person name="Siddiqui A."/>
            <person name="Sterky F."/>
            <person name="Terry A."/>
            <person name="Tsai C.-J."/>
            <person name="Uberbacher E."/>
            <person name="Unneberg P."/>
            <person name="Vahala J."/>
            <person name="Wall K."/>
            <person name="Wessler S."/>
            <person name="Yang G."/>
            <person name="Yin T."/>
            <person name="Douglas C."/>
            <person name="Marra M."/>
            <person name="Sandberg G."/>
            <person name="Van de Peer Y."/>
            <person name="Rokhsar D.S."/>
        </authorList>
    </citation>
    <scope>NUCLEOTIDE SEQUENCE [LARGE SCALE GENOMIC DNA]</scope>
    <source>
        <strain>cv. Nisqually</strain>
    </source>
</reference>
<evidence type="ECO:0000255" key="1">
    <source>
        <dbReference type="HAMAP-Rule" id="MF_01316"/>
    </source>
</evidence>
<accession>A4GYP2</accession>
<gene>
    <name evidence="1" type="primary">psbI</name>
    <name type="ordered locus">Poptr_cp004</name>
</gene>
<geneLocation type="chloroplast"/>
<sequence>MLTLKLFVYTVVIFFVSLFIFGFLSNDPGRNPGREE</sequence>
<proteinExistence type="inferred from homology"/>
<dbReference type="EMBL" id="EF489041">
    <property type="protein sequence ID" value="ABO36686.1"/>
    <property type="molecule type" value="Genomic_DNA"/>
</dbReference>
<dbReference type="RefSeq" id="YP_001109483.1">
    <property type="nucleotide sequence ID" value="NC_009143.1"/>
</dbReference>
<dbReference type="SMR" id="A4GYP2"/>
<dbReference type="FunCoup" id="A4GYP2">
    <property type="interactions" value="57"/>
</dbReference>
<dbReference type="STRING" id="3694.A4GYP2"/>
<dbReference type="EnsemblPlants" id="Potri.013G138690.1.v4.1">
    <property type="protein sequence ID" value="Potri.013G138690.1.v4.1"/>
    <property type="gene ID" value="Potri.013G138690.v4.1"/>
</dbReference>
<dbReference type="GeneID" id="4929634"/>
<dbReference type="Gramene" id="Potri.013G138690.1.v4.1">
    <property type="protein sequence ID" value="Potri.013G138690.1.v4.1"/>
    <property type="gene ID" value="Potri.013G138690.v4.1"/>
</dbReference>
<dbReference type="KEGG" id="pop:4929634"/>
<dbReference type="InParanoid" id="A4GYP2"/>
<dbReference type="OrthoDB" id="564007at2759"/>
<dbReference type="Proteomes" id="UP000006729">
    <property type="component" value="Chloroplast"/>
</dbReference>
<dbReference type="GO" id="GO:0009535">
    <property type="term" value="C:chloroplast thylakoid membrane"/>
    <property type="evidence" value="ECO:0007669"/>
    <property type="project" value="UniProtKB-SubCell"/>
</dbReference>
<dbReference type="GO" id="GO:0009539">
    <property type="term" value="C:photosystem II reaction center"/>
    <property type="evidence" value="ECO:0007669"/>
    <property type="project" value="InterPro"/>
</dbReference>
<dbReference type="GO" id="GO:0015979">
    <property type="term" value="P:photosynthesis"/>
    <property type="evidence" value="ECO:0007669"/>
    <property type="project" value="UniProtKB-UniRule"/>
</dbReference>
<dbReference type="HAMAP" id="MF_01316">
    <property type="entry name" value="PSII_PsbI"/>
    <property type="match status" value="1"/>
</dbReference>
<dbReference type="InterPro" id="IPR003686">
    <property type="entry name" value="PSII_PsbI"/>
</dbReference>
<dbReference type="InterPro" id="IPR037271">
    <property type="entry name" value="PSII_PsbI_sf"/>
</dbReference>
<dbReference type="NCBIfam" id="NF002735">
    <property type="entry name" value="PRK02655.1"/>
    <property type="match status" value="1"/>
</dbReference>
<dbReference type="PANTHER" id="PTHR35772">
    <property type="entry name" value="PHOTOSYSTEM II REACTION CENTER PROTEIN I"/>
    <property type="match status" value="1"/>
</dbReference>
<dbReference type="PANTHER" id="PTHR35772:SF1">
    <property type="entry name" value="PHOTOSYSTEM II REACTION CENTER PROTEIN I"/>
    <property type="match status" value="1"/>
</dbReference>
<dbReference type="Pfam" id="PF02532">
    <property type="entry name" value="PsbI"/>
    <property type="match status" value="1"/>
</dbReference>
<dbReference type="SUPFAM" id="SSF161041">
    <property type="entry name" value="Photosystem II reaction center protein I, PsbI"/>
    <property type="match status" value="1"/>
</dbReference>
<keyword id="KW-0150">Chloroplast</keyword>
<keyword id="KW-0472">Membrane</keyword>
<keyword id="KW-0602">Photosynthesis</keyword>
<keyword id="KW-0604">Photosystem II</keyword>
<keyword id="KW-0934">Plastid</keyword>
<keyword id="KW-0674">Reaction center</keyword>
<keyword id="KW-1185">Reference proteome</keyword>
<keyword id="KW-0793">Thylakoid</keyword>
<keyword id="KW-0812">Transmembrane</keyword>
<keyword id="KW-1133">Transmembrane helix</keyword>
<name>PSBI_POPTR</name>
<protein>
    <recommendedName>
        <fullName evidence="1">Photosystem II reaction center protein I</fullName>
        <shortName evidence="1">PSII-I</shortName>
    </recommendedName>
    <alternativeName>
        <fullName evidence="1">PSII 4.8 kDa protein</fullName>
    </alternativeName>
</protein>
<comment type="function">
    <text evidence="1">One of the components of the core complex of photosystem II (PSII), required for its stability and/or assembly. PSII is a light-driven water:plastoquinone oxidoreductase that uses light energy to abstract electrons from H(2)O, generating O(2) and a proton gradient subsequently used for ATP formation. It consists of a core antenna complex that captures photons, and an electron transfer chain that converts photonic excitation into a charge separation.</text>
</comment>
<comment type="subunit">
    <text evidence="1">PSII is composed of 1 copy each of membrane proteins PsbA, PsbB, PsbC, PsbD, PsbE, PsbF, PsbH, PsbI, PsbJ, PsbK, PsbL, PsbM, PsbT, PsbX, PsbY, PsbZ, Psb30/Ycf12, at least 3 peripheral proteins of the oxygen-evolving complex and a large number of cofactors. It forms dimeric complexes.</text>
</comment>
<comment type="subcellular location">
    <subcellularLocation>
        <location evidence="1">Plastid</location>
        <location evidence="1">Chloroplast thylakoid membrane</location>
        <topology evidence="1">Single-pass membrane protein</topology>
    </subcellularLocation>
</comment>
<comment type="similarity">
    <text evidence="1">Belongs to the PsbI family.</text>
</comment>
<organism>
    <name type="scientific">Populus trichocarpa</name>
    <name type="common">Western balsam poplar</name>
    <name type="synonym">Populus balsamifera subsp. trichocarpa</name>
    <dbReference type="NCBI Taxonomy" id="3694"/>
    <lineage>
        <taxon>Eukaryota</taxon>
        <taxon>Viridiplantae</taxon>
        <taxon>Streptophyta</taxon>
        <taxon>Embryophyta</taxon>
        <taxon>Tracheophyta</taxon>
        <taxon>Spermatophyta</taxon>
        <taxon>Magnoliopsida</taxon>
        <taxon>eudicotyledons</taxon>
        <taxon>Gunneridae</taxon>
        <taxon>Pentapetalae</taxon>
        <taxon>rosids</taxon>
        <taxon>fabids</taxon>
        <taxon>Malpighiales</taxon>
        <taxon>Salicaceae</taxon>
        <taxon>Saliceae</taxon>
        <taxon>Populus</taxon>
    </lineage>
</organism>
<feature type="chain" id="PRO_0000298327" description="Photosystem II reaction center protein I">
    <location>
        <begin position="1"/>
        <end position="36"/>
    </location>
</feature>
<feature type="transmembrane region" description="Helical" evidence="1">
    <location>
        <begin position="4"/>
        <end position="24"/>
    </location>
</feature>